<proteinExistence type="inferred from homology"/>
<accession>C1B4G8</accession>
<reference key="1">
    <citation type="submission" date="2009-03" db="EMBL/GenBank/DDBJ databases">
        <title>Comparison of the complete genome sequences of Rhodococcus erythropolis PR4 and Rhodococcus opacus B4.</title>
        <authorList>
            <person name="Takarada H."/>
            <person name="Sekine M."/>
            <person name="Hosoyama A."/>
            <person name="Yamada R."/>
            <person name="Fujisawa T."/>
            <person name="Omata S."/>
            <person name="Shimizu A."/>
            <person name="Tsukatani N."/>
            <person name="Tanikawa S."/>
            <person name="Fujita N."/>
            <person name="Harayama S."/>
        </authorList>
    </citation>
    <scope>NUCLEOTIDE SEQUENCE [LARGE SCALE GENOMIC DNA]</scope>
    <source>
        <strain>B4</strain>
    </source>
</reference>
<sequence>MLRTHLAGSLRAEQAQQTVTLTGWVARRRDHGGVIFIDLRDASGVSQVVFREGAAAEQAHRLRAEYCVKVTGVVEVRPEGNQNFEIPTGAIEVNVTELEVLNESAPLPFQLDDQAGEEARLKYRYLDLRREGPGHAIRLRSKVNAAARAVLAHHEFVEVETPTLTRSTPEGARDFLVPARLQPGSFYALPQSPQLFKQLLMVGGIERYYQIARCYRDEDFRADRQPEFTQLDIEMSFVNQDDVILLAEEVLTSLWKLVGHEIKTPIARMTYAEAMRRYGSDKPDLRFGVELVECAEFFTDTTFRVFQQEYVGAVVMPGGASQPRKQLDAWQEWAKQRGAKGLAYVLVGEDGTLGGPVAKNLTDAERDGLAAHVGAKPGDCIFFAAGATKSSRALLGAARGEIARKQNLIDPDAWAFVWIVDAPLFEPTADATASGDVALGYSAWTAVHHAFTSPKPESIDTFDTDPGSALAYAYDIVCNGNEIGGGSIRIHRKDIQERVFKVMGISHEEAEEKFGFLLDAFAFGAPPHGGIAFGWDRITALLAGVDSIREVIAFPKSGGGVDPLTSAPAPITAQQRKESGVDAKPEPKGDAAAAKPQVSAEK</sequence>
<name>SYDND_RHOOB</name>
<comment type="function">
    <text evidence="1">Aspartyl-tRNA synthetase with relaxed tRNA specificity since it is able to aspartylate not only its cognate tRNA(Asp) but also tRNA(Asn). Reaction proceeds in two steps: L-aspartate is first activated by ATP to form Asp-AMP and then transferred to the acceptor end of tRNA(Asp/Asn).</text>
</comment>
<comment type="catalytic activity">
    <reaction evidence="1">
        <text>tRNA(Asx) + L-aspartate + ATP = L-aspartyl-tRNA(Asx) + AMP + diphosphate</text>
        <dbReference type="Rhea" id="RHEA:18349"/>
        <dbReference type="Rhea" id="RHEA-COMP:9710"/>
        <dbReference type="Rhea" id="RHEA-COMP:9711"/>
        <dbReference type="ChEBI" id="CHEBI:29991"/>
        <dbReference type="ChEBI" id="CHEBI:30616"/>
        <dbReference type="ChEBI" id="CHEBI:33019"/>
        <dbReference type="ChEBI" id="CHEBI:78442"/>
        <dbReference type="ChEBI" id="CHEBI:78516"/>
        <dbReference type="ChEBI" id="CHEBI:456215"/>
        <dbReference type="EC" id="6.1.1.23"/>
    </reaction>
</comment>
<comment type="subunit">
    <text evidence="1">Homodimer.</text>
</comment>
<comment type="subcellular location">
    <subcellularLocation>
        <location evidence="1">Cytoplasm</location>
    </subcellularLocation>
</comment>
<comment type="similarity">
    <text evidence="1">Belongs to the class-II aminoacyl-tRNA synthetase family. Type 1 subfamily.</text>
</comment>
<gene>
    <name evidence="1" type="primary">aspS</name>
    <name type="ordered locus">ROP_69100</name>
</gene>
<protein>
    <recommendedName>
        <fullName evidence="1">Aspartate--tRNA(Asp/Asn) ligase</fullName>
        <ecNumber evidence="1">6.1.1.23</ecNumber>
    </recommendedName>
    <alternativeName>
        <fullName evidence="1">Aspartyl-tRNA synthetase</fullName>
        <shortName evidence="1">AspRS</shortName>
    </alternativeName>
    <alternativeName>
        <fullName evidence="1">Non-discriminating aspartyl-tRNA synthetase</fullName>
        <shortName evidence="1">ND-AspRS</shortName>
    </alternativeName>
</protein>
<feature type="chain" id="PRO_1000199007" description="Aspartate--tRNA(Asp/Asn) ligase">
    <location>
        <begin position="1"/>
        <end position="602"/>
    </location>
</feature>
<feature type="region of interest" description="Aspartate" evidence="1">
    <location>
        <begin position="194"/>
        <end position="197"/>
    </location>
</feature>
<feature type="region of interest" description="Disordered" evidence="2">
    <location>
        <begin position="559"/>
        <end position="602"/>
    </location>
</feature>
<feature type="compositionally biased region" description="Basic and acidic residues" evidence="2">
    <location>
        <begin position="575"/>
        <end position="589"/>
    </location>
</feature>
<feature type="binding site" evidence="1">
    <location>
        <position position="170"/>
    </location>
    <ligand>
        <name>L-aspartate</name>
        <dbReference type="ChEBI" id="CHEBI:29991"/>
    </ligand>
</feature>
<feature type="binding site" evidence="1">
    <location>
        <begin position="216"/>
        <end position="218"/>
    </location>
    <ligand>
        <name>ATP</name>
        <dbReference type="ChEBI" id="CHEBI:30616"/>
    </ligand>
</feature>
<feature type="binding site" evidence="1">
    <location>
        <position position="216"/>
    </location>
    <ligand>
        <name>L-aspartate</name>
        <dbReference type="ChEBI" id="CHEBI:29991"/>
    </ligand>
</feature>
<feature type="binding site" evidence="1">
    <location>
        <position position="225"/>
    </location>
    <ligand>
        <name>ATP</name>
        <dbReference type="ChEBI" id="CHEBI:30616"/>
    </ligand>
</feature>
<feature type="binding site" evidence="1">
    <location>
        <position position="448"/>
    </location>
    <ligand>
        <name>L-aspartate</name>
        <dbReference type="ChEBI" id="CHEBI:29991"/>
    </ligand>
</feature>
<feature type="binding site" evidence="1">
    <location>
        <position position="482"/>
    </location>
    <ligand>
        <name>ATP</name>
        <dbReference type="ChEBI" id="CHEBI:30616"/>
    </ligand>
</feature>
<feature type="binding site" evidence="1">
    <location>
        <position position="489"/>
    </location>
    <ligand>
        <name>L-aspartate</name>
        <dbReference type="ChEBI" id="CHEBI:29991"/>
    </ligand>
</feature>
<feature type="binding site" evidence="1">
    <location>
        <begin position="534"/>
        <end position="537"/>
    </location>
    <ligand>
        <name>ATP</name>
        <dbReference type="ChEBI" id="CHEBI:30616"/>
    </ligand>
</feature>
<feature type="site" description="Important for tRNA non-discrimination" evidence="1">
    <location>
        <position position="31"/>
    </location>
</feature>
<feature type="site" description="Important for tRNA non-discrimination" evidence="1">
    <location>
        <position position="80"/>
    </location>
</feature>
<organism>
    <name type="scientific">Rhodococcus opacus (strain B4)</name>
    <dbReference type="NCBI Taxonomy" id="632772"/>
    <lineage>
        <taxon>Bacteria</taxon>
        <taxon>Bacillati</taxon>
        <taxon>Actinomycetota</taxon>
        <taxon>Actinomycetes</taxon>
        <taxon>Mycobacteriales</taxon>
        <taxon>Nocardiaceae</taxon>
        <taxon>Rhodococcus</taxon>
    </lineage>
</organism>
<evidence type="ECO:0000255" key="1">
    <source>
        <dbReference type="HAMAP-Rule" id="MF_00044"/>
    </source>
</evidence>
<evidence type="ECO:0000256" key="2">
    <source>
        <dbReference type="SAM" id="MobiDB-lite"/>
    </source>
</evidence>
<dbReference type="EC" id="6.1.1.23" evidence="1"/>
<dbReference type="EMBL" id="AP011115">
    <property type="protein sequence ID" value="BAH55157.1"/>
    <property type="molecule type" value="Genomic_DNA"/>
</dbReference>
<dbReference type="RefSeq" id="WP_015890587.1">
    <property type="nucleotide sequence ID" value="NC_012522.1"/>
</dbReference>
<dbReference type="SMR" id="C1B4G8"/>
<dbReference type="STRING" id="632772.ROP_69100"/>
<dbReference type="KEGG" id="rop:ROP_69100"/>
<dbReference type="PATRIC" id="fig|632772.20.peg.7201"/>
<dbReference type="HOGENOM" id="CLU_014330_3_2_11"/>
<dbReference type="OrthoDB" id="9802326at2"/>
<dbReference type="Proteomes" id="UP000002212">
    <property type="component" value="Chromosome"/>
</dbReference>
<dbReference type="GO" id="GO:0005737">
    <property type="term" value="C:cytoplasm"/>
    <property type="evidence" value="ECO:0007669"/>
    <property type="project" value="UniProtKB-SubCell"/>
</dbReference>
<dbReference type="GO" id="GO:0004815">
    <property type="term" value="F:aspartate-tRNA ligase activity"/>
    <property type="evidence" value="ECO:0007669"/>
    <property type="project" value="UniProtKB-UniRule"/>
</dbReference>
<dbReference type="GO" id="GO:0050560">
    <property type="term" value="F:aspartate-tRNA(Asn) ligase activity"/>
    <property type="evidence" value="ECO:0007669"/>
    <property type="project" value="UniProtKB-EC"/>
</dbReference>
<dbReference type="GO" id="GO:0005524">
    <property type="term" value="F:ATP binding"/>
    <property type="evidence" value="ECO:0007669"/>
    <property type="project" value="UniProtKB-UniRule"/>
</dbReference>
<dbReference type="GO" id="GO:0003676">
    <property type="term" value="F:nucleic acid binding"/>
    <property type="evidence" value="ECO:0007669"/>
    <property type="project" value="InterPro"/>
</dbReference>
<dbReference type="GO" id="GO:0006422">
    <property type="term" value="P:aspartyl-tRNA aminoacylation"/>
    <property type="evidence" value="ECO:0007669"/>
    <property type="project" value="UniProtKB-UniRule"/>
</dbReference>
<dbReference type="CDD" id="cd00777">
    <property type="entry name" value="AspRS_core"/>
    <property type="match status" value="1"/>
</dbReference>
<dbReference type="CDD" id="cd04317">
    <property type="entry name" value="EcAspRS_like_N"/>
    <property type="match status" value="1"/>
</dbReference>
<dbReference type="Gene3D" id="3.30.930.10">
    <property type="entry name" value="Bira Bifunctional Protein, Domain 2"/>
    <property type="match status" value="1"/>
</dbReference>
<dbReference type="Gene3D" id="3.30.1360.30">
    <property type="entry name" value="GAD-like domain"/>
    <property type="match status" value="1"/>
</dbReference>
<dbReference type="Gene3D" id="2.40.50.140">
    <property type="entry name" value="Nucleic acid-binding proteins"/>
    <property type="match status" value="1"/>
</dbReference>
<dbReference type="HAMAP" id="MF_00044">
    <property type="entry name" value="Asp_tRNA_synth_type1"/>
    <property type="match status" value="1"/>
</dbReference>
<dbReference type="InterPro" id="IPR004364">
    <property type="entry name" value="Aa-tRNA-synt_II"/>
</dbReference>
<dbReference type="InterPro" id="IPR006195">
    <property type="entry name" value="aa-tRNA-synth_II"/>
</dbReference>
<dbReference type="InterPro" id="IPR045864">
    <property type="entry name" value="aa-tRNA-synth_II/BPL/LPL"/>
</dbReference>
<dbReference type="InterPro" id="IPR004524">
    <property type="entry name" value="Asp-tRNA-ligase_1"/>
</dbReference>
<dbReference type="InterPro" id="IPR047089">
    <property type="entry name" value="Asp-tRNA-ligase_1_N"/>
</dbReference>
<dbReference type="InterPro" id="IPR002312">
    <property type="entry name" value="Asp/Asn-tRNA-synth_IIb"/>
</dbReference>
<dbReference type="InterPro" id="IPR047090">
    <property type="entry name" value="AspRS_core"/>
</dbReference>
<dbReference type="InterPro" id="IPR004115">
    <property type="entry name" value="GAD-like_sf"/>
</dbReference>
<dbReference type="InterPro" id="IPR029351">
    <property type="entry name" value="GAD_dom"/>
</dbReference>
<dbReference type="InterPro" id="IPR012340">
    <property type="entry name" value="NA-bd_OB-fold"/>
</dbReference>
<dbReference type="InterPro" id="IPR004365">
    <property type="entry name" value="NA-bd_OB_tRNA"/>
</dbReference>
<dbReference type="NCBIfam" id="TIGR00459">
    <property type="entry name" value="aspS_bact"/>
    <property type="match status" value="1"/>
</dbReference>
<dbReference type="NCBIfam" id="NF001750">
    <property type="entry name" value="PRK00476.1"/>
    <property type="match status" value="1"/>
</dbReference>
<dbReference type="PANTHER" id="PTHR22594:SF5">
    <property type="entry name" value="ASPARTATE--TRNA LIGASE, MITOCHONDRIAL"/>
    <property type="match status" value="1"/>
</dbReference>
<dbReference type="PANTHER" id="PTHR22594">
    <property type="entry name" value="ASPARTYL/LYSYL-TRNA SYNTHETASE"/>
    <property type="match status" value="1"/>
</dbReference>
<dbReference type="Pfam" id="PF02938">
    <property type="entry name" value="GAD"/>
    <property type="match status" value="1"/>
</dbReference>
<dbReference type="Pfam" id="PF00152">
    <property type="entry name" value="tRNA-synt_2"/>
    <property type="match status" value="1"/>
</dbReference>
<dbReference type="Pfam" id="PF01336">
    <property type="entry name" value="tRNA_anti-codon"/>
    <property type="match status" value="1"/>
</dbReference>
<dbReference type="PRINTS" id="PR01042">
    <property type="entry name" value="TRNASYNTHASP"/>
</dbReference>
<dbReference type="SUPFAM" id="SSF55681">
    <property type="entry name" value="Class II aaRS and biotin synthetases"/>
    <property type="match status" value="1"/>
</dbReference>
<dbReference type="SUPFAM" id="SSF55261">
    <property type="entry name" value="GAD domain-like"/>
    <property type="match status" value="1"/>
</dbReference>
<dbReference type="SUPFAM" id="SSF50249">
    <property type="entry name" value="Nucleic acid-binding proteins"/>
    <property type="match status" value="1"/>
</dbReference>
<dbReference type="PROSITE" id="PS50862">
    <property type="entry name" value="AA_TRNA_LIGASE_II"/>
    <property type="match status" value="1"/>
</dbReference>
<keyword id="KW-0030">Aminoacyl-tRNA synthetase</keyword>
<keyword id="KW-0067">ATP-binding</keyword>
<keyword id="KW-0963">Cytoplasm</keyword>
<keyword id="KW-0436">Ligase</keyword>
<keyword id="KW-0547">Nucleotide-binding</keyword>
<keyword id="KW-0648">Protein biosynthesis</keyword>